<accession>Q10Y25</accession>
<comment type="function">
    <text evidence="1">Key component of the KaiABC oscillator complex, which constitutes the main circadian regulator in cyanobacteria. Complex composition changes during the circadian cycle to control KaiC phosphorylation. KaiA stimulates KaiC autophosphorylation, while KaiB sequesters KaiA, leading to KaiC autodephosphorylation. Phospho-Ser-431 KaiC accumulation triggers binding of KaiB to form the KaiB(6):KaiC(6) complex, leading to changes in output regulators CikA and SasA. KaiB switches to a thioredoxin-like fold (KaiB(fs)) when bound to KaiC. KaiB(6):KaiC(6) formation exposes a site for KaiA binding that sequesters KaiA from KaiC, making the KaiC(6):KaiB(6):KaiA(12) complex that results in KaiC autodephosphorylation.</text>
</comment>
<comment type="function">
    <text evidence="1">A metamorphic protein which reversibly switches between an inactive tetrameric fold and a rare, thioredoxin-like monomeric fold (KaiB(fs)). KaiB(fs) binds phospho-KaiC, KaiA and CikA. KaiA and CikA compete for binding to KaiB(fs), and KaiB(fs) and SasA compete for binding to KaiC, thus the clock oscillator and output signal pathway are tightly coupled.</text>
</comment>
<comment type="subunit">
    <text evidence="1">The KaiABC complex composition changes during the circadian cycle to control KaiC phosphorylation. Complexes KaiC(6), KaiA(2-4):KaiC(6), KaiB(6):KaiC(6) and KaiC(6):KaiB(6):KaiA(12) are among the most important forms, many form cooperatively. Undergoes a major conformational rearrangment; in the free state forms homotetramers as a dimer of dimers. When bound to the CI domain of KaiC switches to a monomeric thioredoxin-fold (KaiB(fs)). KaiB(fs) binds CikA, leading it to dephosphorylate phospho-RpaA.</text>
</comment>
<comment type="domain">
    <text evidence="1">Has 2 forms, fold switches to a thioredoxin-like fold (KaiB(fs)) when bound to KaiC.</text>
</comment>
<comment type="similarity">
    <text evidence="1">Belongs to the KaiB family.</text>
</comment>
<proteinExistence type="inferred from homology"/>
<reference key="1">
    <citation type="journal article" date="2015" name="Proc. Natl. Acad. Sci. U.S.A.">
        <title>Trichodesmium genome maintains abundant, widespread noncoding DNA in situ, despite oligotrophic lifestyle.</title>
        <authorList>
            <person name="Walworth N."/>
            <person name="Pfreundt U."/>
            <person name="Nelson W.C."/>
            <person name="Mincer T."/>
            <person name="Heidelberg J.F."/>
            <person name="Fu F."/>
            <person name="Waterbury J.B."/>
            <person name="Glavina del Rio T."/>
            <person name="Goodwin L."/>
            <person name="Kyrpides N.C."/>
            <person name="Land M.L."/>
            <person name="Woyke T."/>
            <person name="Hutchins D.A."/>
            <person name="Hess W.R."/>
            <person name="Webb E.A."/>
        </authorList>
    </citation>
    <scope>NUCLEOTIDE SEQUENCE [LARGE SCALE GENOMIC DNA]</scope>
    <source>
        <strain>IMS101</strain>
    </source>
</reference>
<sequence>MSPLKKTYVLKLYVAGNTPNSVRALKTLKEILEQEFQGVYALKVIDVLKNPQLAEEDKILATPTLSKILPPPVRKIIGDLSDREKVLIGLDLLYEELNEDEYNL</sequence>
<organism>
    <name type="scientific">Trichodesmium erythraeum (strain IMS101)</name>
    <dbReference type="NCBI Taxonomy" id="203124"/>
    <lineage>
        <taxon>Bacteria</taxon>
        <taxon>Bacillati</taxon>
        <taxon>Cyanobacteriota</taxon>
        <taxon>Cyanophyceae</taxon>
        <taxon>Oscillatoriophycideae</taxon>
        <taxon>Oscillatoriales</taxon>
        <taxon>Microcoleaceae</taxon>
        <taxon>Trichodesmium</taxon>
    </lineage>
</organism>
<gene>
    <name evidence="1" type="primary">kaiB</name>
    <name type="ordered locus">Tery_3804</name>
</gene>
<dbReference type="EMBL" id="CP000393">
    <property type="protein sequence ID" value="ABG52849.1"/>
    <property type="molecule type" value="Genomic_DNA"/>
</dbReference>
<dbReference type="RefSeq" id="WP_011613179.1">
    <property type="nucleotide sequence ID" value="NC_008312.1"/>
</dbReference>
<dbReference type="SMR" id="Q10Y25"/>
<dbReference type="STRING" id="203124.Tery_3804"/>
<dbReference type="KEGG" id="ter:Tery_3804"/>
<dbReference type="eggNOG" id="COG4251">
    <property type="taxonomic scope" value="Bacteria"/>
</dbReference>
<dbReference type="HOGENOM" id="CLU_144073_0_0_3"/>
<dbReference type="OrthoDB" id="5458519at2"/>
<dbReference type="GO" id="GO:0007623">
    <property type="term" value="P:circadian rhythm"/>
    <property type="evidence" value="ECO:0007669"/>
    <property type="project" value="UniProtKB-UniRule"/>
</dbReference>
<dbReference type="CDD" id="cd02978">
    <property type="entry name" value="KaiB_like"/>
    <property type="match status" value="1"/>
</dbReference>
<dbReference type="FunFam" id="3.40.30.10:FF:000180">
    <property type="entry name" value="Circadian clock protein KaiB"/>
    <property type="match status" value="1"/>
</dbReference>
<dbReference type="Gene3D" id="3.40.30.10">
    <property type="entry name" value="Glutaredoxin"/>
    <property type="match status" value="1"/>
</dbReference>
<dbReference type="HAMAP" id="MF_01835">
    <property type="entry name" value="KaiB"/>
    <property type="match status" value="1"/>
</dbReference>
<dbReference type="InterPro" id="IPR013474">
    <property type="entry name" value="Circ_KaiB"/>
</dbReference>
<dbReference type="InterPro" id="IPR039022">
    <property type="entry name" value="KaiB-like"/>
</dbReference>
<dbReference type="InterPro" id="IPR011649">
    <property type="entry name" value="KaiB_domain"/>
</dbReference>
<dbReference type="InterPro" id="IPR036249">
    <property type="entry name" value="Thioredoxin-like_sf"/>
</dbReference>
<dbReference type="NCBIfam" id="TIGR02654">
    <property type="entry name" value="circ_KaiB"/>
    <property type="match status" value="1"/>
</dbReference>
<dbReference type="NCBIfam" id="NF006798">
    <property type="entry name" value="PRK09301.1"/>
    <property type="match status" value="1"/>
</dbReference>
<dbReference type="PANTHER" id="PTHR41709:SF2">
    <property type="entry name" value="CIRCADIAN CLOCK PROTEIN KAIB2"/>
    <property type="match status" value="1"/>
</dbReference>
<dbReference type="PANTHER" id="PTHR41709">
    <property type="entry name" value="KAIB-LIKE PROTEIN 1"/>
    <property type="match status" value="1"/>
</dbReference>
<dbReference type="Pfam" id="PF07689">
    <property type="entry name" value="KaiB"/>
    <property type="match status" value="1"/>
</dbReference>
<dbReference type="SMART" id="SM01248">
    <property type="entry name" value="KaiB"/>
    <property type="match status" value="1"/>
</dbReference>
<dbReference type="SUPFAM" id="SSF52833">
    <property type="entry name" value="Thioredoxin-like"/>
    <property type="match status" value="1"/>
</dbReference>
<keyword id="KW-0090">Biological rhythms</keyword>
<feature type="chain" id="PRO_1000070465" description="Circadian clock oscillator protein KaiB">
    <location>
        <begin position="1"/>
        <end position="104"/>
    </location>
</feature>
<evidence type="ECO:0000255" key="1">
    <source>
        <dbReference type="HAMAP-Rule" id="MF_01835"/>
    </source>
</evidence>
<protein>
    <recommendedName>
        <fullName evidence="1">Circadian clock oscillator protein KaiB</fullName>
    </recommendedName>
</protein>
<name>KAIB_TRIEI</name>